<evidence type="ECO:0000255" key="1">
    <source>
        <dbReference type="HAMAP-Rule" id="MF_00235"/>
    </source>
</evidence>
<feature type="chain" id="PRO_1000191141" description="Adenylate kinase">
    <location>
        <begin position="1"/>
        <end position="214"/>
    </location>
</feature>
<feature type="region of interest" description="NMP" evidence="1">
    <location>
        <begin position="30"/>
        <end position="59"/>
    </location>
</feature>
<feature type="region of interest" description="LID">
    <location>
        <begin position="122"/>
        <end position="159"/>
    </location>
</feature>
<feature type="binding site" evidence="1">
    <location>
        <begin position="10"/>
        <end position="15"/>
    </location>
    <ligand>
        <name>ATP</name>
        <dbReference type="ChEBI" id="CHEBI:30616"/>
    </ligand>
</feature>
<feature type="binding site" evidence="1">
    <location>
        <position position="31"/>
    </location>
    <ligand>
        <name>AMP</name>
        <dbReference type="ChEBI" id="CHEBI:456215"/>
    </ligand>
</feature>
<feature type="binding site" evidence="1">
    <location>
        <position position="36"/>
    </location>
    <ligand>
        <name>AMP</name>
        <dbReference type="ChEBI" id="CHEBI:456215"/>
    </ligand>
</feature>
<feature type="binding site" evidence="1">
    <location>
        <begin position="57"/>
        <end position="59"/>
    </location>
    <ligand>
        <name>AMP</name>
        <dbReference type="ChEBI" id="CHEBI:456215"/>
    </ligand>
</feature>
<feature type="binding site" evidence="1">
    <location>
        <begin position="85"/>
        <end position="88"/>
    </location>
    <ligand>
        <name>AMP</name>
        <dbReference type="ChEBI" id="CHEBI:456215"/>
    </ligand>
</feature>
<feature type="binding site" evidence="1">
    <location>
        <position position="92"/>
    </location>
    <ligand>
        <name>AMP</name>
        <dbReference type="ChEBI" id="CHEBI:456215"/>
    </ligand>
</feature>
<feature type="binding site" evidence="1">
    <location>
        <position position="123"/>
    </location>
    <ligand>
        <name>ATP</name>
        <dbReference type="ChEBI" id="CHEBI:30616"/>
    </ligand>
</feature>
<feature type="binding site" evidence="1">
    <location>
        <begin position="132"/>
        <end position="133"/>
    </location>
    <ligand>
        <name>ATP</name>
        <dbReference type="ChEBI" id="CHEBI:30616"/>
    </ligand>
</feature>
<feature type="binding site" evidence="1">
    <location>
        <position position="156"/>
    </location>
    <ligand>
        <name>AMP</name>
        <dbReference type="ChEBI" id="CHEBI:456215"/>
    </ligand>
</feature>
<feature type="binding site" evidence="1">
    <location>
        <position position="167"/>
    </location>
    <ligand>
        <name>AMP</name>
        <dbReference type="ChEBI" id="CHEBI:456215"/>
    </ligand>
</feature>
<feature type="binding site" evidence="1">
    <location>
        <position position="200"/>
    </location>
    <ligand>
        <name>ATP</name>
        <dbReference type="ChEBI" id="CHEBI:30616"/>
    </ligand>
</feature>
<dbReference type="EC" id="2.7.4.3" evidence="1"/>
<dbReference type="EMBL" id="CU928145">
    <property type="protein sequence ID" value="CAU96360.1"/>
    <property type="molecule type" value="Genomic_DNA"/>
</dbReference>
<dbReference type="RefSeq" id="WP_001220233.1">
    <property type="nucleotide sequence ID" value="NZ_CP028304.1"/>
</dbReference>
<dbReference type="SMR" id="B7L799"/>
<dbReference type="GeneID" id="75170492"/>
<dbReference type="KEGG" id="eck:EC55989_0487"/>
<dbReference type="HOGENOM" id="CLU_032354_1_2_6"/>
<dbReference type="UniPathway" id="UPA00588">
    <property type="reaction ID" value="UER00649"/>
</dbReference>
<dbReference type="Proteomes" id="UP000000746">
    <property type="component" value="Chromosome"/>
</dbReference>
<dbReference type="GO" id="GO:0005737">
    <property type="term" value="C:cytoplasm"/>
    <property type="evidence" value="ECO:0007669"/>
    <property type="project" value="UniProtKB-SubCell"/>
</dbReference>
<dbReference type="GO" id="GO:0004017">
    <property type="term" value="F:adenylate kinase activity"/>
    <property type="evidence" value="ECO:0007669"/>
    <property type="project" value="UniProtKB-UniRule"/>
</dbReference>
<dbReference type="GO" id="GO:0005524">
    <property type="term" value="F:ATP binding"/>
    <property type="evidence" value="ECO:0007669"/>
    <property type="project" value="UniProtKB-UniRule"/>
</dbReference>
<dbReference type="GO" id="GO:0044209">
    <property type="term" value="P:AMP salvage"/>
    <property type="evidence" value="ECO:0007669"/>
    <property type="project" value="UniProtKB-UniRule"/>
</dbReference>
<dbReference type="CDD" id="cd01428">
    <property type="entry name" value="ADK"/>
    <property type="match status" value="1"/>
</dbReference>
<dbReference type="FunFam" id="3.40.50.300:FF:000106">
    <property type="entry name" value="Adenylate kinase mitochondrial"/>
    <property type="match status" value="1"/>
</dbReference>
<dbReference type="Gene3D" id="3.40.50.300">
    <property type="entry name" value="P-loop containing nucleotide triphosphate hydrolases"/>
    <property type="match status" value="1"/>
</dbReference>
<dbReference type="HAMAP" id="MF_00235">
    <property type="entry name" value="Adenylate_kinase_Adk"/>
    <property type="match status" value="1"/>
</dbReference>
<dbReference type="InterPro" id="IPR006259">
    <property type="entry name" value="Adenyl_kin_sub"/>
</dbReference>
<dbReference type="InterPro" id="IPR000850">
    <property type="entry name" value="Adenylat/UMP-CMP_kin"/>
</dbReference>
<dbReference type="InterPro" id="IPR033690">
    <property type="entry name" value="Adenylat_kinase_CS"/>
</dbReference>
<dbReference type="InterPro" id="IPR007862">
    <property type="entry name" value="Adenylate_kinase_lid-dom"/>
</dbReference>
<dbReference type="InterPro" id="IPR027417">
    <property type="entry name" value="P-loop_NTPase"/>
</dbReference>
<dbReference type="NCBIfam" id="TIGR01351">
    <property type="entry name" value="adk"/>
    <property type="match status" value="1"/>
</dbReference>
<dbReference type="NCBIfam" id="NF001379">
    <property type="entry name" value="PRK00279.1-1"/>
    <property type="match status" value="1"/>
</dbReference>
<dbReference type="NCBIfam" id="NF001380">
    <property type="entry name" value="PRK00279.1-2"/>
    <property type="match status" value="1"/>
</dbReference>
<dbReference type="NCBIfam" id="NF001381">
    <property type="entry name" value="PRK00279.1-3"/>
    <property type="match status" value="1"/>
</dbReference>
<dbReference type="NCBIfam" id="NF011100">
    <property type="entry name" value="PRK14527.1"/>
    <property type="match status" value="1"/>
</dbReference>
<dbReference type="PANTHER" id="PTHR23359">
    <property type="entry name" value="NUCLEOTIDE KINASE"/>
    <property type="match status" value="1"/>
</dbReference>
<dbReference type="Pfam" id="PF00406">
    <property type="entry name" value="ADK"/>
    <property type="match status" value="1"/>
</dbReference>
<dbReference type="Pfam" id="PF05191">
    <property type="entry name" value="ADK_lid"/>
    <property type="match status" value="1"/>
</dbReference>
<dbReference type="PRINTS" id="PR00094">
    <property type="entry name" value="ADENYLTKNASE"/>
</dbReference>
<dbReference type="SUPFAM" id="SSF52540">
    <property type="entry name" value="P-loop containing nucleoside triphosphate hydrolases"/>
    <property type="match status" value="1"/>
</dbReference>
<dbReference type="PROSITE" id="PS00113">
    <property type="entry name" value="ADENYLATE_KINASE"/>
    <property type="match status" value="1"/>
</dbReference>
<organism>
    <name type="scientific">Escherichia coli (strain 55989 / EAEC)</name>
    <dbReference type="NCBI Taxonomy" id="585055"/>
    <lineage>
        <taxon>Bacteria</taxon>
        <taxon>Pseudomonadati</taxon>
        <taxon>Pseudomonadota</taxon>
        <taxon>Gammaproteobacteria</taxon>
        <taxon>Enterobacterales</taxon>
        <taxon>Enterobacteriaceae</taxon>
        <taxon>Escherichia</taxon>
    </lineage>
</organism>
<proteinExistence type="inferred from homology"/>
<sequence>MRIILLGAPGAGKGTQAQFIMEKYGIPQISTGDMLRAAVKSGSELGKQAKDIMDAGKLVTDELVIALVKERIAQEDCRNGFLLDGFPRTIPQADAMKEAGINVDYVLEFDVPDELIVDRIVGRRVHAPSGRVYHVKFNPPKVEGKDDVTGEELTTRKDDQEETVRKRLVEYHQMTAPLIGYYSKEAEAGNTKYAKVDGTKPVAEVRADLEKILG</sequence>
<protein>
    <recommendedName>
        <fullName evidence="1">Adenylate kinase</fullName>
        <shortName evidence="1">AK</shortName>
        <ecNumber evidence="1">2.7.4.3</ecNumber>
    </recommendedName>
    <alternativeName>
        <fullName evidence="1">ATP-AMP transphosphorylase</fullName>
    </alternativeName>
    <alternativeName>
        <fullName evidence="1">ATP:AMP phosphotransferase</fullName>
    </alternativeName>
    <alternativeName>
        <fullName evidence="1">Adenylate monophosphate kinase</fullName>
    </alternativeName>
</protein>
<comment type="function">
    <text evidence="1">Catalyzes the reversible transfer of the terminal phosphate group between ATP and AMP. Plays an important role in cellular energy homeostasis and in adenine nucleotide metabolism.</text>
</comment>
<comment type="catalytic activity">
    <reaction evidence="1">
        <text>AMP + ATP = 2 ADP</text>
        <dbReference type="Rhea" id="RHEA:12973"/>
        <dbReference type="ChEBI" id="CHEBI:30616"/>
        <dbReference type="ChEBI" id="CHEBI:456215"/>
        <dbReference type="ChEBI" id="CHEBI:456216"/>
        <dbReference type="EC" id="2.7.4.3"/>
    </reaction>
</comment>
<comment type="pathway">
    <text evidence="1">Purine metabolism; AMP biosynthesis via salvage pathway; AMP from ADP: step 1/1.</text>
</comment>
<comment type="subunit">
    <text evidence="1">Monomer.</text>
</comment>
<comment type="subcellular location">
    <subcellularLocation>
        <location evidence="1">Cytoplasm</location>
    </subcellularLocation>
</comment>
<comment type="domain">
    <text evidence="1">Consists of three domains, a large central CORE domain and two small peripheral domains, NMPbind and LID, which undergo movements during catalysis. The LID domain closes over the site of phosphoryl transfer upon ATP binding. Assembling and dissambling the active center during each catalytic cycle provides an effective means to prevent ATP hydrolysis.</text>
</comment>
<comment type="similarity">
    <text evidence="1">Belongs to the adenylate kinase family.</text>
</comment>
<reference key="1">
    <citation type="journal article" date="2009" name="PLoS Genet.">
        <title>Organised genome dynamics in the Escherichia coli species results in highly diverse adaptive paths.</title>
        <authorList>
            <person name="Touchon M."/>
            <person name="Hoede C."/>
            <person name="Tenaillon O."/>
            <person name="Barbe V."/>
            <person name="Baeriswyl S."/>
            <person name="Bidet P."/>
            <person name="Bingen E."/>
            <person name="Bonacorsi S."/>
            <person name="Bouchier C."/>
            <person name="Bouvet O."/>
            <person name="Calteau A."/>
            <person name="Chiapello H."/>
            <person name="Clermont O."/>
            <person name="Cruveiller S."/>
            <person name="Danchin A."/>
            <person name="Diard M."/>
            <person name="Dossat C."/>
            <person name="Karoui M.E."/>
            <person name="Frapy E."/>
            <person name="Garry L."/>
            <person name="Ghigo J.M."/>
            <person name="Gilles A.M."/>
            <person name="Johnson J."/>
            <person name="Le Bouguenec C."/>
            <person name="Lescat M."/>
            <person name="Mangenot S."/>
            <person name="Martinez-Jehanne V."/>
            <person name="Matic I."/>
            <person name="Nassif X."/>
            <person name="Oztas S."/>
            <person name="Petit M.A."/>
            <person name="Pichon C."/>
            <person name="Rouy Z."/>
            <person name="Ruf C.S."/>
            <person name="Schneider D."/>
            <person name="Tourret J."/>
            <person name="Vacherie B."/>
            <person name="Vallenet D."/>
            <person name="Medigue C."/>
            <person name="Rocha E.P.C."/>
            <person name="Denamur E."/>
        </authorList>
    </citation>
    <scope>NUCLEOTIDE SEQUENCE [LARGE SCALE GENOMIC DNA]</scope>
    <source>
        <strain>55989 / EAEC</strain>
    </source>
</reference>
<gene>
    <name evidence="1" type="primary">adk</name>
    <name type="ordered locus">EC55989_0487</name>
</gene>
<accession>B7L799</accession>
<name>KAD_ECO55</name>
<keyword id="KW-0067">ATP-binding</keyword>
<keyword id="KW-0963">Cytoplasm</keyword>
<keyword id="KW-0418">Kinase</keyword>
<keyword id="KW-0545">Nucleotide biosynthesis</keyword>
<keyword id="KW-0547">Nucleotide-binding</keyword>
<keyword id="KW-1185">Reference proteome</keyword>
<keyword id="KW-0808">Transferase</keyword>